<sequence>MSNQHTLLSSNLLPVGSNISTWWNFGSMLLTCLILQTSTGFFLAMHYTANINLAFSSVIHILRDVPYGWIMQNTHAIGASMFFICVYIHIARGLYYGLYLNKEVWLSGTALLITLMATAFFGYVLPWGQMSFWAATVITNLLTAIPYLGTTLTTWLWGGFSINDPTLTRFFALHFILPFLIISLSSIHIILLHNEGSNNPLGTNPDIDKIPFHPYHSYKDMLVLTIMITLLFTIMSFTPNLFNDPENFSKANPLVTPQHIKPEWYFLFAYGILRSIPNKLGGTLALLMSVMILTTTPFTHTSRIRSMTFRPLTQTLFWLLIATFITITWTATKPVEPPFIFISQMASIIYFSFFIINPILGWAENKMQ</sequence>
<evidence type="ECO:0000250" key="1"/>
<evidence type="ECO:0000250" key="2">
    <source>
        <dbReference type="UniProtKB" id="P00157"/>
    </source>
</evidence>
<evidence type="ECO:0000255" key="3">
    <source>
        <dbReference type="PROSITE-ProRule" id="PRU00967"/>
    </source>
</evidence>
<evidence type="ECO:0000255" key="4">
    <source>
        <dbReference type="PROSITE-ProRule" id="PRU00968"/>
    </source>
</evidence>
<dbReference type="EMBL" id="AF217836">
    <property type="protein sequence ID" value="AAF37255.1"/>
    <property type="molecule type" value="Genomic_DNA"/>
</dbReference>
<dbReference type="SMR" id="Q9MLJ2"/>
<dbReference type="GO" id="GO:0005743">
    <property type="term" value="C:mitochondrial inner membrane"/>
    <property type="evidence" value="ECO:0007669"/>
    <property type="project" value="UniProtKB-SubCell"/>
</dbReference>
<dbReference type="GO" id="GO:0045275">
    <property type="term" value="C:respiratory chain complex III"/>
    <property type="evidence" value="ECO:0007669"/>
    <property type="project" value="InterPro"/>
</dbReference>
<dbReference type="GO" id="GO:0046872">
    <property type="term" value="F:metal ion binding"/>
    <property type="evidence" value="ECO:0007669"/>
    <property type="project" value="UniProtKB-KW"/>
</dbReference>
<dbReference type="GO" id="GO:0008121">
    <property type="term" value="F:ubiquinol-cytochrome-c reductase activity"/>
    <property type="evidence" value="ECO:0007669"/>
    <property type="project" value="InterPro"/>
</dbReference>
<dbReference type="GO" id="GO:0006122">
    <property type="term" value="P:mitochondrial electron transport, ubiquinol to cytochrome c"/>
    <property type="evidence" value="ECO:0007669"/>
    <property type="project" value="TreeGrafter"/>
</dbReference>
<dbReference type="CDD" id="cd00290">
    <property type="entry name" value="cytochrome_b_C"/>
    <property type="match status" value="1"/>
</dbReference>
<dbReference type="CDD" id="cd00284">
    <property type="entry name" value="Cytochrome_b_N"/>
    <property type="match status" value="1"/>
</dbReference>
<dbReference type="Gene3D" id="1.20.810.10">
    <property type="entry name" value="Cytochrome Bc1 Complex, Chain C"/>
    <property type="match status" value="1"/>
</dbReference>
<dbReference type="InterPro" id="IPR005798">
    <property type="entry name" value="Cyt_b/b6_C"/>
</dbReference>
<dbReference type="InterPro" id="IPR036150">
    <property type="entry name" value="Cyt_b/b6_C_sf"/>
</dbReference>
<dbReference type="InterPro" id="IPR005797">
    <property type="entry name" value="Cyt_b/b6_N"/>
</dbReference>
<dbReference type="InterPro" id="IPR027387">
    <property type="entry name" value="Cytb/b6-like_sf"/>
</dbReference>
<dbReference type="InterPro" id="IPR030689">
    <property type="entry name" value="Cytochrome_b"/>
</dbReference>
<dbReference type="InterPro" id="IPR048260">
    <property type="entry name" value="Cytochrome_b_C_euk/bac"/>
</dbReference>
<dbReference type="InterPro" id="IPR048259">
    <property type="entry name" value="Cytochrome_b_N_euk/bac"/>
</dbReference>
<dbReference type="InterPro" id="IPR016174">
    <property type="entry name" value="Di-haem_cyt_TM"/>
</dbReference>
<dbReference type="PANTHER" id="PTHR19271">
    <property type="entry name" value="CYTOCHROME B"/>
    <property type="match status" value="1"/>
</dbReference>
<dbReference type="PANTHER" id="PTHR19271:SF16">
    <property type="entry name" value="CYTOCHROME B"/>
    <property type="match status" value="1"/>
</dbReference>
<dbReference type="Pfam" id="PF00032">
    <property type="entry name" value="Cytochrom_B_C"/>
    <property type="match status" value="1"/>
</dbReference>
<dbReference type="Pfam" id="PF00033">
    <property type="entry name" value="Cytochrome_B"/>
    <property type="match status" value="1"/>
</dbReference>
<dbReference type="PIRSF" id="PIRSF038885">
    <property type="entry name" value="COB"/>
    <property type="match status" value="1"/>
</dbReference>
<dbReference type="SUPFAM" id="SSF81648">
    <property type="entry name" value="a domain/subunit of cytochrome bc1 complex (Ubiquinol-cytochrome c reductase)"/>
    <property type="match status" value="1"/>
</dbReference>
<dbReference type="SUPFAM" id="SSF81342">
    <property type="entry name" value="Transmembrane di-heme cytochromes"/>
    <property type="match status" value="1"/>
</dbReference>
<dbReference type="PROSITE" id="PS51003">
    <property type="entry name" value="CYTB_CTER"/>
    <property type="match status" value="1"/>
</dbReference>
<dbReference type="PROSITE" id="PS51002">
    <property type="entry name" value="CYTB_NTER"/>
    <property type="match status" value="1"/>
</dbReference>
<name>CYB_NOTAT</name>
<feature type="chain" id="PRO_0000061281" description="Cytochrome b">
    <location>
        <begin position="1"/>
        <end position="368"/>
    </location>
</feature>
<feature type="transmembrane region" description="Helical" evidence="2">
    <location>
        <begin position="25"/>
        <end position="45"/>
    </location>
</feature>
<feature type="transmembrane region" description="Helical" evidence="2">
    <location>
        <begin position="69"/>
        <end position="90"/>
    </location>
</feature>
<feature type="transmembrane region" description="Helical" evidence="2">
    <location>
        <begin position="105"/>
        <end position="125"/>
    </location>
</feature>
<feature type="transmembrane region" description="Helical" evidence="2">
    <location>
        <begin position="170"/>
        <end position="190"/>
    </location>
</feature>
<feature type="transmembrane region" description="Helical" evidence="2">
    <location>
        <begin position="218"/>
        <end position="238"/>
    </location>
</feature>
<feature type="transmembrane region" description="Helical" evidence="2">
    <location>
        <begin position="280"/>
        <end position="300"/>
    </location>
</feature>
<feature type="transmembrane region" description="Helical" evidence="2">
    <location>
        <begin position="312"/>
        <end position="332"/>
    </location>
</feature>
<feature type="transmembrane region" description="Helical" evidence="2">
    <location>
        <begin position="339"/>
        <end position="358"/>
    </location>
</feature>
<feature type="binding site" description="axial binding residue" evidence="2">
    <location>
        <position position="75"/>
    </location>
    <ligand>
        <name>heme b</name>
        <dbReference type="ChEBI" id="CHEBI:60344"/>
        <label>b562</label>
    </ligand>
    <ligandPart>
        <name>Fe</name>
        <dbReference type="ChEBI" id="CHEBI:18248"/>
    </ligandPart>
</feature>
<feature type="binding site" description="axial binding residue" evidence="2">
    <location>
        <position position="89"/>
    </location>
    <ligand>
        <name>heme b</name>
        <dbReference type="ChEBI" id="CHEBI:60344"/>
        <label>b566</label>
    </ligand>
    <ligandPart>
        <name>Fe</name>
        <dbReference type="ChEBI" id="CHEBI:18248"/>
    </ligandPart>
</feature>
<feature type="binding site" description="axial binding residue" evidence="2">
    <location>
        <position position="174"/>
    </location>
    <ligand>
        <name>heme b</name>
        <dbReference type="ChEBI" id="CHEBI:60344"/>
        <label>b562</label>
    </ligand>
    <ligandPart>
        <name>Fe</name>
        <dbReference type="ChEBI" id="CHEBI:18248"/>
    </ligandPart>
</feature>
<feature type="binding site" description="axial binding residue" evidence="2">
    <location>
        <position position="188"/>
    </location>
    <ligand>
        <name>heme b</name>
        <dbReference type="ChEBI" id="CHEBI:60344"/>
        <label>b566</label>
    </ligand>
    <ligandPart>
        <name>Fe</name>
        <dbReference type="ChEBI" id="CHEBI:18248"/>
    </ligandPart>
</feature>
<feature type="binding site" evidence="2">
    <location>
        <position position="193"/>
    </location>
    <ligand>
        <name>a ubiquinone</name>
        <dbReference type="ChEBI" id="CHEBI:16389"/>
    </ligand>
</feature>
<proteinExistence type="inferred from homology"/>
<organism>
    <name type="scientific">Notechis ater</name>
    <name type="common">Black tiger snake</name>
    <dbReference type="NCBI Taxonomy" id="111176"/>
    <lineage>
        <taxon>Eukaryota</taxon>
        <taxon>Metazoa</taxon>
        <taxon>Chordata</taxon>
        <taxon>Craniata</taxon>
        <taxon>Vertebrata</taxon>
        <taxon>Euteleostomi</taxon>
        <taxon>Lepidosauria</taxon>
        <taxon>Squamata</taxon>
        <taxon>Bifurcata</taxon>
        <taxon>Unidentata</taxon>
        <taxon>Episquamata</taxon>
        <taxon>Toxicofera</taxon>
        <taxon>Serpentes</taxon>
        <taxon>Colubroidea</taxon>
        <taxon>Elapidae</taxon>
        <taxon>Hydrophiinae</taxon>
        <taxon>Notechis</taxon>
    </lineage>
</organism>
<gene>
    <name type="primary">MT-CYB</name>
    <name type="synonym">COB</name>
    <name type="synonym">CYTB</name>
    <name type="synonym">MTCYB</name>
</gene>
<protein>
    <recommendedName>
        <fullName>Cytochrome b</fullName>
    </recommendedName>
    <alternativeName>
        <fullName>Complex III subunit 3</fullName>
    </alternativeName>
    <alternativeName>
        <fullName>Complex III subunit III</fullName>
    </alternativeName>
    <alternativeName>
        <fullName>Cytochrome b-c1 complex subunit 3</fullName>
    </alternativeName>
    <alternativeName>
        <fullName>Ubiquinol-cytochrome-c reductase complex cytochrome b subunit</fullName>
    </alternativeName>
</protein>
<accession>Q9MLJ2</accession>
<reference key="1">
    <citation type="journal article" date="2000" name="Mol. Phylogenet. Evol.">
        <title>Phylogenetic relationships of elapid snakes based on cytochrome b mtDNA sequences.</title>
        <authorList>
            <person name="Slowinski J.B."/>
            <person name="Keogh J.S."/>
        </authorList>
    </citation>
    <scope>NUCLEOTIDE SEQUENCE [GENOMIC DNA]</scope>
</reference>
<comment type="function">
    <text evidence="2">Component of the ubiquinol-cytochrome c reductase complex (complex III or cytochrome b-c1 complex) that is part of the mitochondrial respiratory chain. The b-c1 complex mediates electron transfer from ubiquinol to cytochrome c. Contributes to the generation of a proton gradient across the mitochondrial membrane that is then used for ATP synthesis.</text>
</comment>
<comment type="cofactor">
    <cofactor evidence="2">
        <name>heme b</name>
        <dbReference type="ChEBI" id="CHEBI:60344"/>
    </cofactor>
    <text evidence="2">Binds 2 heme b groups non-covalently.</text>
</comment>
<comment type="subunit">
    <text evidence="2">The cytochrome bc1 complex contains 3 respiratory subunits (MT-CYB, CYC1 and UQCRFS1), 2 core proteins (UQCRC1 and UQCRC2) and probably 6 low-molecular weight proteins.</text>
</comment>
<comment type="subcellular location">
    <subcellularLocation>
        <location evidence="2">Mitochondrion inner membrane</location>
        <topology evidence="2">Multi-pass membrane protein</topology>
    </subcellularLocation>
</comment>
<comment type="miscellaneous">
    <text evidence="1">Heme 1 (or BL or b562) is low-potential and absorbs at about 562 nm, and heme 2 (or BH or b566) is high-potential and absorbs at about 566 nm.</text>
</comment>
<comment type="similarity">
    <text evidence="3 4">Belongs to the cytochrome b family.</text>
</comment>
<comment type="caution">
    <text evidence="2">The full-length protein contains only eight transmembrane helices, not nine as predicted by bioinformatics tools.</text>
</comment>
<geneLocation type="mitochondrion"/>
<keyword id="KW-0249">Electron transport</keyword>
<keyword id="KW-0349">Heme</keyword>
<keyword id="KW-0408">Iron</keyword>
<keyword id="KW-0472">Membrane</keyword>
<keyword id="KW-0479">Metal-binding</keyword>
<keyword id="KW-0496">Mitochondrion</keyword>
<keyword id="KW-0999">Mitochondrion inner membrane</keyword>
<keyword id="KW-0679">Respiratory chain</keyword>
<keyword id="KW-0812">Transmembrane</keyword>
<keyword id="KW-1133">Transmembrane helix</keyword>
<keyword id="KW-0813">Transport</keyword>
<keyword id="KW-0830">Ubiquinone</keyword>